<proteinExistence type="evidence at protein level"/>
<organism>
    <name type="scientific">Escherichia coli (strain K12)</name>
    <dbReference type="NCBI Taxonomy" id="83333"/>
    <lineage>
        <taxon>Bacteria</taxon>
        <taxon>Pseudomonadati</taxon>
        <taxon>Pseudomonadota</taxon>
        <taxon>Gammaproteobacteria</taxon>
        <taxon>Enterobacterales</taxon>
        <taxon>Enterobacteriaceae</taxon>
        <taxon>Escherichia</taxon>
    </lineage>
</organism>
<dbReference type="EC" id="2.7.7.7"/>
<dbReference type="EMBL" id="X04027">
    <property type="protein sequence ID" value="CAA27661.1"/>
    <property type="molecule type" value="Genomic_DNA"/>
</dbReference>
<dbReference type="EMBL" id="K00985">
    <property type="protein sequence ID" value="AAA24564.1"/>
    <property type="molecule type" value="Genomic_DNA"/>
</dbReference>
<dbReference type="EMBL" id="U70214">
    <property type="protein sequence ID" value="AAB08637.1"/>
    <property type="status" value="ALT_INIT"/>
    <property type="molecule type" value="Genomic_DNA"/>
</dbReference>
<dbReference type="EMBL" id="U00096">
    <property type="protein sequence ID" value="AAC73320.1"/>
    <property type="molecule type" value="Genomic_DNA"/>
</dbReference>
<dbReference type="EMBL" id="AP009048">
    <property type="protein sequence ID" value="BAA77886.1"/>
    <property type="molecule type" value="Genomic_DNA"/>
</dbReference>
<dbReference type="PIR" id="A64746">
    <property type="entry name" value="IQECQ"/>
</dbReference>
<dbReference type="RefSeq" id="NP_414751.1">
    <property type="nucleotide sequence ID" value="NC_000913.3"/>
</dbReference>
<dbReference type="RefSeq" id="WP_001340895.1">
    <property type="nucleotide sequence ID" value="NZ_SSZK01000029.1"/>
</dbReference>
<dbReference type="PDB" id="1J53">
    <property type="method" value="X-ray"/>
    <property type="resolution" value="1.80 A"/>
    <property type="chains" value="A=1-186"/>
</dbReference>
<dbReference type="PDB" id="1J54">
    <property type="method" value="X-ray"/>
    <property type="resolution" value="1.70 A"/>
    <property type="chains" value="A=1-186"/>
</dbReference>
<dbReference type="PDB" id="2GUI">
    <property type="method" value="X-ray"/>
    <property type="resolution" value="1.60 A"/>
    <property type="chains" value="A=2-186"/>
</dbReference>
<dbReference type="PDB" id="2IDO">
    <property type="method" value="X-ray"/>
    <property type="resolution" value="2.10 A"/>
    <property type="chains" value="A/C=1-186"/>
</dbReference>
<dbReference type="PDB" id="2XY8">
    <property type="method" value="NMR"/>
    <property type="chains" value="A=1-186"/>
</dbReference>
<dbReference type="PDB" id="4GX8">
    <property type="method" value="X-ray"/>
    <property type="resolution" value="1.70 A"/>
    <property type="chains" value="A/B/C/D=209-243"/>
</dbReference>
<dbReference type="PDB" id="4GX9">
    <property type="method" value="X-ray"/>
    <property type="resolution" value="2.15 A"/>
    <property type="chains" value="A/B/C/D=200-243"/>
</dbReference>
<dbReference type="PDB" id="5FKU">
    <property type="method" value="EM"/>
    <property type="resolution" value="8.34 A"/>
    <property type="chains" value="D=1-243"/>
</dbReference>
<dbReference type="PDB" id="5FKV">
    <property type="method" value="EM"/>
    <property type="resolution" value="8.00 A"/>
    <property type="chains" value="D=1-243"/>
</dbReference>
<dbReference type="PDB" id="5FKW">
    <property type="method" value="EM"/>
    <property type="resolution" value="7.30 A"/>
    <property type="chains" value="D=1-243"/>
</dbReference>
<dbReference type="PDB" id="5M1S">
    <property type="method" value="EM"/>
    <property type="resolution" value="6.70 A"/>
    <property type="chains" value="D=1-243"/>
</dbReference>
<dbReference type="PDBsum" id="1J53"/>
<dbReference type="PDBsum" id="1J54"/>
<dbReference type="PDBsum" id="2GUI"/>
<dbReference type="PDBsum" id="2IDO"/>
<dbReference type="PDBsum" id="2XY8"/>
<dbReference type="PDBsum" id="4GX8"/>
<dbReference type="PDBsum" id="4GX9"/>
<dbReference type="PDBsum" id="5FKU"/>
<dbReference type="PDBsum" id="5FKV"/>
<dbReference type="PDBsum" id="5FKW"/>
<dbReference type="PDBsum" id="5M1S"/>
<dbReference type="BMRB" id="P03007"/>
<dbReference type="EMDB" id="EMD-3198"/>
<dbReference type="EMDB" id="EMD-3201"/>
<dbReference type="EMDB" id="EMD-3202"/>
<dbReference type="EMDB" id="EMD-4141"/>
<dbReference type="SMR" id="P03007"/>
<dbReference type="BioGRID" id="4262121">
    <property type="interactions" value="77"/>
</dbReference>
<dbReference type="BioGRID" id="850796">
    <property type="interactions" value="6"/>
</dbReference>
<dbReference type="ComplexPortal" id="CPX-1925">
    <property type="entry name" value="DNA polymerase III core complex"/>
</dbReference>
<dbReference type="DIP" id="DIP-9462N"/>
<dbReference type="FunCoup" id="P03007">
    <property type="interactions" value="156"/>
</dbReference>
<dbReference type="IntAct" id="P03007">
    <property type="interactions" value="30"/>
</dbReference>
<dbReference type="MINT" id="P03007"/>
<dbReference type="STRING" id="511145.b0215"/>
<dbReference type="ChEMBL" id="CHEMBL1075047"/>
<dbReference type="DrugBank" id="DB01643">
    <property type="generic name" value="Thymidine monophosphate"/>
</dbReference>
<dbReference type="jPOST" id="P03007"/>
<dbReference type="PaxDb" id="511145-b0215"/>
<dbReference type="EnsemblBacteria" id="AAC73320">
    <property type="protein sequence ID" value="AAC73320"/>
    <property type="gene ID" value="b0215"/>
</dbReference>
<dbReference type="GeneID" id="946441"/>
<dbReference type="KEGG" id="ecj:JW0205"/>
<dbReference type="KEGG" id="eco:b0215"/>
<dbReference type="PATRIC" id="fig|511145.12.peg.217"/>
<dbReference type="EchoBASE" id="EB0239"/>
<dbReference type="eggNOG" id="COG0847">
    <property type="taxonomic scope" value="Bacteria"/>
</dbReference>
<dbReference type="HOGENOM" id="CLU_047806_2_0_6"/>
<dbReference type="InParanoid" id="P03007"/>
<dbReference type="OMA" id="FHVYLNP"/>
<dbReference type="OrthoDB" id="9804290at2"/>
<dbReference type="PhylomeDB" id="P03007"/>
<dbReference type="BioCyc" id="EcoCyc:EG10243-MONOMER"/>
<dbReference type="BioCyc" id="MetaCyc:EG10243-MONOMER"/>
<dbReference type="EvolutionaryTrace" id="P03007"/>
<dbReference type="PRO" id="PR:P03007"/>
<dbReference type="Proteomes" id="UP000000625">
    <property type="component" value="Chromosome"/>
</dbReference>
<dbReference type="GO" id="GO:0005829">
    <property type="term" value="C:cytosol"/>
    <property type="evidence" value="ECO:0000318"/>
    <property type="project" value="GO_Central"/>
</dbReference>
<dbReference type="GO" id="GO:0009360">
    <property type="term" value="C:DNA polymerase III complex"/>
    <property type="evidence" value="ECO:0000303"/>
    <property type="project" value="ComplexPortal"/>
</dbReference>
<dbReference type="GO" id="GO:0044776">
    <property type="term" value="C:DNA polymerase III, core complex"/>
    <property type="evidence" value="ECO:0000314"/>
    <property type="project" value="EcoCyc"/>
</dbReference>
<dbReference type="GO" id="GO:0030894">
    <property type="term" value="C:replisome"/>
    <property type="evidence" value="ECO:0000303"/>
    <property type="project" value="ComplexPortal"/>
</dbReference>
<dbReference type="GO" id="GO:0008408">
    <property type="term" value="F:3'-5' exonuclease activity"/>
    <property type="evidence" value="ECO:0000318"/>
    <property type="project" value="GO_Central"/>
</dbReference>
<dbReference type="GO" id="GO:0003677">
    <property type="term" value="F:DNA binding"/>
    <property type="evidence" value="ECO:0007669"/>
    <property type="project" value="InterPro"/>
</dbReference>
<dbReference type="GO" id="GO:0003887">
    <property type="term" value="F:DNA-directed DNA polymerase activity"/>
    <property type="evidence" value="ECO:0007669"/>
    <property type="project" value="UniProtKB-KW"/>
</dbReference>
<dbReference type="GO" id="GO:0004527">
    <property type="term" value="F:exonuclease activity"/>
    <property type="evidence" value="ECO:0000314"/>
    <property type="project" value="EcoCyc"/>
</dbReference>
<dbReference type="GO" id="GO:0046872">
    <property type="term" value="F:metal ion binding"/>
    <property type="evidence" value="ECO:0007669"/>
    <property type="project" value="UniProtKB-KW"/>
</dbReference>
<dbReference type="GO" id="GO:0045004">
    <property type="term" value="P:DNA replication proofreading"/>
    <property type="evidence" value="ECO:0000315"/>
    <property type="project" value="EcoCyc"/>
</dbReference>
<dbReference type="GO" id="GO:0006261">
    <property type="term" value="P:DNA-templated DNA replication"/>
    <property type="evidence" value="ECO:0000303"/>
    <property type="project" value="ComplexPortal"/>
</dbReference>
<dbReference type="GO" id="GO:0006273">
    <property type="term" value="P:lagging strand elongation"/>
    <property type="evidence" value="ECO:0000314"/>
    <property type="project" value="ComplexPortal"/>
</dbReference>
<dbReference type="GO" id="GO:0006272">
    <property type="term" value="P:leading strand elongation"/>
    <property type="evidence" value="ECO:0000314"/>
    <property type="project" value="ComplexPortal"/>
</dbReference>
<dbReference type="CDD" id="cd06131">
    <property type="entry name" value="DNA_pol_III_epsilon_Ecoli_like"/>
    <property type="match status" value="1"/>
</dbReference>
<dbReference type="FunFam" id="3.30.420.10:FF:000012">
    <property type="entry name" value="DNA polymerase III subunit epsilon"/>
    <property type="match status" value="1"/>
</dbReference>
<dbReference type="Gene3D" id="3.20.20.140">
    <property type="entry name" value="Metal-dependent hydrolases"/>
    <property type="match status" value="1"/>
</dbReference>
<dbReference type="Gene3D" id="3.30.420.10">
    <property type="entry name" value="Ribonuclease H-like superfamily/Ribonuclease H"/>
    <property type="match status" value="1"/>
</dbReference>
<dbReference type="InterPro" id="IPR006054">
    <property type="entry name" value="DnaQ"/>
</dbReference>
<dbReference type="InterPro" id="IPR006309">
    <property type="entry name" value="DnaQ_proteo"/>
</dbReference>
<dbReference type="InterPro" id="IPR013520">
    <property type="entry name" value="Exonuclease_RNaseT/DNA_pol3"/>
</dbReference>
<dbReference type="InterPro" id="IPR012337">
    <property type="entry name" value="RNaseH-like_sf"/>
</dbReference>
<dbReference type="InterPro" id="IPR036397">
    <property type="entry name" value="RNaseH_sf"/>
</dbReference>
<dbReference type="NCBIfam" id="TIGR00573">
    <property type="entry name" value="dnaq"/>
    <property type="match status" value="1"/>
</dbReference>
<dbReference type="NCBIfam" id="TIGR01406">
    <property type="entry name" value="dnaQ_proteo"/>
    <property type="match status" value="1"/>
</dbReference>
<dbReference type="NCBIfam" id="NF004316">
    <property type="entry name" value="PRK05711.1"/>
    <property type="match status" value="1"/>
</dbReference>
<dbReference type="PANTHER" id="PTHR30231">
    <property type="entry name" value="DNA POLYMERASE III SUBUNIT EPSILON"/>
    <property type="match status" value="1"/>
</dbReference>
<dbReference type="PANTHER" id="PTHR30231:SF41">
    <property type="entry name" value="DNA POLYMERASE III SUBUNIT EPSILON"/>
    <property type="match status" value="1"/>
</dbReference>
<dbReference type="Pfam" id="PF00929">
    <property type="entry name" value="RNase_T"/>
    <property type="match status" value="1"/>
</dbReference>
<dbReference type="SMART" id="SM00479">
    <property type="entry name" value="EXOIII"/>
    <property type="match status" value="1"/>
</dbReference>
<dbReference type="SUPFAM" id="SSF53098">
    <property type="entry name" value="Ribonuclease H-like"/>
    <property type="match status" value="1"/>
</dbReference>
<name>DPO3E_ECOLI</name>
<gene>
    <name type="primary">dnaQ</name>
    <name type="synonym">mutD</name>
    <name type="ordered locus">b0215</name>
    <name type="ordered locus">JW0205</name>
</gene>
<evidence type="ECO:0000269" key="1">
    <source>
    </source>
</evidence>
<evidence type="ECO:0000269" key="2">
    <source>
    </source>
</evidence>
<evidence type="ECO:0000269" key="3">
    <source>
    </source>
</evidence>
<evidence type="ECO:0000269" key="4">
    <source>
    </source>
</evidence>
<evidence type="ECO:0000269" key="5">
    <source>
    </source>
</evidence>
<evidence type="ECO:0000269" key="6">
    <source>
    </source>
</evidence>
<evidence type="ECO:0000305" key="7"/>
<evidence type="ECO:0007744" key="8">
    <source>
        <dbReference type="PDB" id="5FKU"/>
    </source>
</evidence>
<evidence type="ECO:0007744" key="9">
    <source>
        <dbReference type="PDB" id="5FKV"/>
    </source>
</evidence>
<evidence type="ECO:0007744" key="10">
    <source>
        <dbReference type="PDB" id="5FKW"/>
    </source>
</evidence>
<evidence type="ECO:0007829" key="11">
    <source>
        <dbReference type="PDB" id="2GUI"/>
    </source>
</evidence>
<evidence type="ECO:0007829" key="12">
    <source>
        <dbReference type="PDB" id="2XY8"/>
    </source>
</evidence>
<evidence type="ECO:0007829" key="13">
    <source>
        <dbReference type="PDB" id="4GX8"/>
    </source>
</evidence>
<feature type="chain" id="PRO_0000105483" description="DNA polymerase III subunit epsilon">
    <location>
        <begin position="1"/>
        <end position="243"/>
    </location>
</feature>
<feature type="active site" description="Proton acceptor">
    <location>
        <position position="162"/>
    </location>
</feature>
<feature type="binding site">
    <location>
        <position position="12"/>
    </location>
    <ligand>
        <name>a divalent metal cation</name>
        <dbReference type="ChEBI" id="CHEBI:60240"/>
        <label>1</label>
        <note>catalytic</note>
    </ligand>
</feature>
<feature type="binding site">
    <location>
        <position position="12"/>
    </location>
    <ligand>
        <name>a divalent metal cation</name>
        <dbReference type="ChEBI" id="CHEBI:60240"/>
        <label>2</label>
        <note>catalytic</note>
    </ligand>
</feature>
<feature type="binding site">
    <location>
        <position position="12"/>
    </location>
    <ligand>
        <name>substrate</name>
    </ligand>
</feature>
<feature type="binding site">
    <location>
        <position position="14"/>
    </location>
    <ligand>
        <name>a divalent metal cation</name>
        <dbReference type="ChEBI" id="CHEBI:60240"/>
        <label>1</label>
        <note>catalytic</note>
    </ligand>
</feature>
<feature type="binding site">
    <location>
        <position position="14"/>
    </location>
    <ligand>
        <name>substrate</name>
    </ligand>
</feature>
<feature type="binding site">
    <location>
        <position position="61"/>
    </location>
    <ligand>
        <name>substrate</name>
    </ligand>
</feature>
<feature type="binding site">
    <location>
        <position position="66"/>
    </location>
    <ligand>
        <name>substrate</name>
    </ligand>
</feature>
<feature type="binding site">
    <location>
        <position position="167"/>
    </location>
    <ligand>
        <name>a divalent metal cation</name>
        <dbReference type="ChEBI" id="CHEBI:60240"/>
        <label>1</label>
        <note>catalytic</note>
    </ligand>
</feature>
<feature type="binding site">
    <location>
        <position position="167"/>
    </location>
    <ligand>
        <name>substrate</name>
    </ligand>
</feature>
<feature type="mutagenesis site" description="In mutD5, reduces suppression of AZT sensitivity of holC or yoaA knockouts, reduces exonuclease activity." evidence="5">
    <original>T</original>
    <variation>I</variation>
    <location>
        <position position="15"/>
    </location>
</feature>
<feature type="mutagenesis site" description="Increases binding to beta sliding clamp (dnaN), increases stability of enzyme complex." evidence="4">
    <original>TSMAF</original>
    <variation>LSLPL</variation>
    <location>
        <begin position="183"/>
        <end position="187"/>
    </location>
</feature>
<feature type="strand" evidence="11">
    <location>
        <begin position="7"/>
        <end position="16"/>
    </location>
</feature>
<feature type="strand" evidence="11">
    <location>
        <begin position="20"/>
        <end position="23"/>
    </location>
</feature>
<feature type="turn" evidence="11">
    <location>
        <begin position="24"/>
        <end position="27"/>
    </location>
</feature>
<feature type="strand" evidence="11">
    <location>
        <begin position="30"/>
        <end position="39"/>
    </location>
</feature>
<feature type="strand" evidence="11">
    <location>
        <begin position="48"/>
        <end position="51"/>
    </location>
</feature>
<feature type="helix" evidence="11">
    <location>
        <begin position="60"/>
        <end position="66"/>
    </location>
</feature>
<feature type="helix" evidence="11">
    <location>
        <begin position="70"/>
        <end position="73"/>
    </location>
</feature>
<feature type="helix" evidence="11">
    <location>
        <begin position="79"/>
        <end position="90"/>
    </location>
</feature>
<feature type="strand" evidence="11">
    <location>
        <begin position="93"/>
        <end position="97"/>
    </location>
</feature>
<feature type="helix" evidence="11">
    <location>
        <begin position="100"/>
        <end position="113"/>
    </location>
</feature>
<feature type="helix" evidence="11">
    <location>
        <begin position="121"/>
        <end position="123"/>
    </location>
</feature>
<feature type="strand" evidence="11">
    <location>
        <begin position="125"/>
        <end position="129"/>
    </location>
</feature>
<feature type="helix" evidence="11">
    <location>
        <begin position="130"/>
        <end position="137"/>
    </location>
</feature>
<feature type="helix" evidence="11">
    <location>
        <begin position="145"/>
        <end position="151"/>
    </location>
</feature>
<feature type="strand" evidence="12">
    <location>
        <begin position="156"/>
        <end position="158"/>
    </location>
</feature>
<feature type="helix" evidence="11">
    <location>
        <begin position="164"/>
        <end position="178"/>
    </location>
</feature>
<feature type="helix" evidence="13">
    <location>
        <begin position="219"/>
        <end position="236"/>
    </location>
</feature>
<feature type="helix" evidence="13">
    <location>
        <begin position="240"/>
        <end position="242"/>
    </location>
</feature>
<protein>
    <recommendedName>
        <fullName>DNA polymerase III subunit epsilon</fullName>
        <ecNumber>2.7.7.7</ecNumber>
    </recommendedName>
</protein>
<comment type="function">
    <text evidence="4 6">DNA polymerase III is a complex, multichain enzyme responsible for most of the replicative synthesis in bacteria. The epsilon subunit contain the editing function and is a proofreading 3'-5' exonuclease (PubMed:6340117). Contacts both the beta sliding clamp (dnaN) and the polymerase subunit (dnaE), stabilizing their interaction (PubMed:26499492).</text>
</comment>
<comment type="catalytic activity">
    <reaction>
        <text>DNA(n) + a 2'-deoxyribonucleoside 5'-triphosphate = DNA(n+1) + diphosphate</text>
        <dbReference type="Rhea" id="RHEA:22508"/>
        <dbReference type="Rhea" id="RHEA-COMP:17339"/>
        <dbReference type="Rhea" id="RHEA-COMP:17340"/>
        <dbReference type="ChEBI" id="CHEBI:33019"/>
        <dbReference type="ChEBI" id="CHEBI:61560"/>
        <dbReference type="ChEBI" id="CHEBI:173112"/>
        <dbReference type="EC" id="2.7.7.7"/>
    </reaction>
</comment>
<comment type="cofactor">
    <cofactor>
        <name>Mg(2+)</name>
        <dbReference type="ChEBI" id="CHEBI:18420"/>
    </cofactor>
    <cofactor>
        <name>Mn(2+)</name>
        <dbReference type="ChEBI" id="CHEBI:29035"/>
    </cofactor>
    <text>Binds 2 divalent metal cations. Magnesium or manganese.</text>
</comment>
<comment type="subunit">
    <text evidence="1 2 3 4 6">In a ternary complex this subunit contacts both the beta sliding clamp (dnaN) and the polymerase subunit (dnaE) (PubMed:26499492). The DNA polymerase III holoenzyme complex contains at least 10 different subunits organized into 3 functionally essential subassemblies: the Pol III core, the beta sliding clamp processivity factor and the clamp-loading complex. The Pol III core (subunits alpha, epsilon and theta) contains the polymerase and the 3'-5' exonuclease proofreading activities (PubMed:6340117). The polymerase is tethered to the template via the dimeric beta sliding clamp processivity factor. The clamp loader (also called gamma complex) assembles the beta sliding clamp onto the primed template and plays a central role in the organization and communication at the replication fork. The clamp-loading complex contains delta, delta', psi and chi, and 3 copies of either or both of two different DnaX proteins, gamma and tau. The DNA replisome complex has a single clamp loader (3 tau and 1 each of delta, delta', psi and chi subunits) which binds 3 Pol III cores (1 core on the leading strand and 2 on the lagging strand) each with a beta sliding clamp dimer. Additional proteins in the replisome are other copies of gamma, psi and chi, Ssb, DNA helicase and RNA primase (PubMed:20413500, PubMed:22157955).</text>
</comment>
<comment type="interaction">
    <interactant intactId="EBI-549131">
        <id>P03007</id>
    </interactant>
    <interactant intactId="EBI-549111">
        <id>P10443</id>
        <label>dnaE</label>
    </interactant>
    <organismsDiffer>false</organismsDiffer>
    <experiments>25</experiments>
</comment>
<comment type="interaction">
    <interactant intactId="EBI-549131">
        <id>P03007</id>
    </interactant>
    <interactant intactId="EBI-542385">
        <id>P0A988</id>
        <label>dnaN</label>
    </interactant>
    <organismsDiffer>false</organismsDiffer>
    <experiments>6</experiments>
</comment>
<comment type="interaction">
    <interactant intactId="EBI-549131">
        <id>P03007</id>
    </interactant>
    <interactant intactId="EBI-549140">
        <id>P06710</id>
        <label>dnaX</label>
    </interactant>
    <organismsDiffer>false</organismsDiffer>
    <experiments>6</experiments>
</comment>
<comment type="interaction">
    <interactant intactId="EBI-549131">
        <id>P03007</id>
    </interactant>
    <interactant intactId="EBI-549153">
        <id>P28630</id>
        <label>holA</label>
    </interactant>
    <organismsDiffer>false</organismsDiffer>
    <experiments>3</experiments>
</comment>
<comment type="interaction">
    <interactant intactId="EBI-549131">
        <id>P03007</id>
    </interactant>
    <interactant intactId="EBI-549182">
        <id>P0ABS8</id>
        <label>holE</label>
    </interactant>
    <organismsDiffer>false</organismsDiffer>
    <experiments>13</experiments>
</comment>
<comment type="sequence caution" evidence="7">
    <conflict type="erroneous initiation">
        <sequence resource="EMBL-CDS" id="AAB08637"/>
    </conflict>
    <text>Extended N-terminus.</text>
</comment>
<reference key="1">
    <citation type="journal article" date="1986" name="J. Mol. Biol.">
        <title>DNA sequence and coding properties of mutD(dnaQ) a dominant Escherichia coli mutator gene.</title>
        <authorList>
            <person name="Cox E.C."/>
            <person name="Horner D.L."/>
        </authorList>
    </citation>
    <scope>NUCLEOTIDE SEQUENCE [GENOMIC DNA]</scope>
</reference>
<reference key="2">
    <citation type="journal article" date="1983" name="Proc. Natl. Acad. Sci. U.S.A.">
        <title>Structure and expression of the dnaQ mutator and the RNase H genes of Escherichia coli: overlap of the promoter regions.</title>
        <authorList>
            <person name="Maki H."/>
            <person name="Horiuchi T."/>
            <person name="Sekiguchi M."/>
        </authorList>
    </citation>
    <scope>NUCLEOTIDE SEQUENCE [GENOMIC DNA]</scope>
</reference>
<reference key="3">
    <citation type="journal article" date="1986" name="Mol. Gen. Genet.">
        <title>Structure and function of dnaQ and mutD mutators of Escherichia coli.</title>
        <authorList>
            <person name="Takano K."/>
            <person name="Nakabeppu Y."/>
            <person name="Maki H."/>
            <person name="Horiuchi T."/>
            <person name="Sekiguchi M."/>
        </authorList>
    </citation>
    <scope>SEQUENCE REVISION</scope>
</reference>
<reference key="4">
    <citation type="submission" date="1996-02" db="EMBL/GenBank/DDBJ databases">
        <title>Systematic sequencing of the Escherichia coli genome: analysis of the 4.0 - 6.0 min (189,987 - 281,416bp) region.</title>
        <authorList>
            <person name="Takemoto K."/>
            <person name="Mori H."/>
            <person name="Murayama N."/>
            <person name="Kataoka K."/>
            <person name="Yano M."/>
            <person name="Itoh T."/>
            <person name="Yamamoto Y."/>
            <person name="Inokuchi H."/>
            <person name="Miki T."/>
            <person name="Hatada E."/>
            <person name="Fukuda R."/>
            <person name="Ichihara S."/>
            <person name="Mizuno T."/>
            <person name="Makino K."/>
            <person name="Nakata A."/>
            <person name="Yura T."/>
            <person name="Sampei G."/>
            <person name="Mizobuchi K."/>
        </authorList>
    </citation>
    <scope>NUCLEOTIDE SEQUENCE [LARGE SCALE GENOMIC DNA]</scope>
    <source>
        <strain>K12 / W3110 / ATCC 27325 / DSM 5911</strain>
    </source>
</reference>
<reference key="5">
    <citation type="submission" date="1997-01" db="EMBL/GenBank/DDBJ databases">
        <title>Sequence of minutes 4-25 of Escherichia coli.</title>
        <authorList>
            <person name="Chung E."/>
            <person name="Allen E."/>
            <person name="Araujo R."/>
            <person name="Aparicio A.M."/>
            <person name="Davis K."/>
            <person name="Duncan M."/>
            <person name="Federspiel N."/>
            <person name="Hyman R."/>
            <person name="Kalman S."/>
            <person name="Komp C."/>
            <person name="Kurdi O."/>
            <person name="Lew H."/>
            <person name="Lin D."/>
            <person name="Namath A."/>
            <person name="Oefner P."/>
            <person name="Roberts D."/>
            <person name="Schramm S."/>
            <person name="Davis R.W."/>
        </authorList>
    </citation>
    <scope>NUCLEOTIDE SEQUENCE [LARGE SCALE GENOMIC DNA]</scope>
    <source>
        <strain>K12 / MG1655 / ATCC 47076</strain>
    </source>
</reference>
<reference key="6">
    <citation type="journal article" date="1997" name="Science">
        <title>The complete genome sequence of Escherichia coli K-12.</title>
        <authorList>
            <person name="Blattner F.R."/>
            <person name="Plunkett G. III"/>
            <person name="Bloch C.A."/>
            <person name="Perna N.T."/>
            <person name="Burland V."/>
            <person name="Riley M."/>
            <person name="Collado-Vides J."/>
            <person name="Glasner J.D."/>
            <person name="Rode C.K."/>
            <person name="Mayhew G.F."/>
            <person name="Gregor J."/>
            <person name="Davis N.W."/>
            <person name="Kirkpatrick H.A."/>
            <person name="Goeden M.A."/>
            <person name="Rose D.J."/>
            <person name="Mau B."/>
            <person name="Shao Y."/>
        </authorList>
    </citation>
    <scope>NUCLEOTIDE SEQUENCE [LARGE SCALE GENOMIC DNA]</scope>
    <source>
        <strain>K12 / MG1655 / ATCC 47076</strain>
    </source>
</reference>
<reference key="7">
    <citation type="journal article" date="2006" name="Mol. Syst. Biol.">
        <title>Highly accurate genome sequences of Escherichia coli K-12 strains MG1655 and W3110.</title>
        <authorList>
            <person name="Hayashi K."/>
            <person name="Morooka N."/>
            <person name="Yamamoto Y."/>
            <person name="Fujita K."/>
            <person name="Isono K."/>
            <person name="Choi S."/>
            <person name="Ohtsubo E."/>
            <person name="Baba T."/>
            <person name="Wanner B.L."/>
            <person name="Mori H."/>
            <person name="Horiuchi T."/>
        </authorList>
    </citation>
    <scope>NUCLEOTIDE SEQUENCE [LARGE SCALE GENOMIC DNA]</scope>
    <source>
        <strain>K12 / W3110 / ATCC 27325 / DSM 5911</strain>
    </source>
</reference>
<reference key="8">
    <citation type="journal article" date="1983" name="Proc. Natl. Acad. Sci. U.S.A.">
        <title>Mutator strains of Escherichia coli, mutD and dnaQ, with defective exonucleolytic editing by DNA polymerase III holoenzyme.</title>
        <authorList>
            <person name="Echols H."/>
            <person name="Lu C."/>
            <person name="Burgers P.M."/>
        </authorList>
    </citation>
    <scope>FUNCTION AS THE EXONUCLEASE SUBUNIT</scope>
</reference>
<reference key="9">
    <citation type="journal article" date="1992" name="Bioessays">
        <title>Accessory protein function in the DNA polymerase III holoenzyme from E. coli.</title>
        <authorList>
            <person name="O'Donnell M."/>
        </authorList>
    </citation>
    <scope>REVIEW</scope>
</reference>
<reference key="10">
    <citation type="journal article" date="1997" name="Electrophoresis">
        <title>Escherichia coli proteome analysis using the gene-protein database.</title>
        <authorList>
            <person name="VanBogelen R.A."/>
            <person name="Abshire K.Z."/>
            <person name="Moldover B."/>
            <person name="Olson E.R."/>
            <person name="Neidhardt F.C."/>
        </authorList>
    </citation>
    <scope>IDENTIFICATION BY 2D-GEL</scope>
</reference>
<reference key="11">
    <citation type="journal article" date="2010" name="Science">
        <title>Stoichiometry and architecture of active DNA replication machinery in Escherichia coli.</title>
        <authorList>
            <person name="Reyes-Lamothe R."/>
            <person name="Sherratt D.J."/>
            <person name="Leake M.C."/>
        </authorList>
    </citation>
    <scope>REPLISOME COMPLEX</scope>
    <scope>SUBUNIT</scope>
</reference>
<reference key="12">
    <citation type="journal article" date="2011" name="Nat. Struct. Mol. Biol.">
        <title>Single-molecule studies reveal the function of a third polymerase in the replisome.</title>
        <authorList>
            <person name="Georgescu R.E."/>
            <person name="Kurth I."/>
            <person name="O'Donnell M.E."/>
        </authorList>
    </citation>
    <scope>REPLISOME COMPLEX</scope>
    <scope>SUBUNIT</scope>
</reference>
<reference key="13">
    <citation type="journal article" date="2015" name="PLoS Genet.">
        <title>Connecting replication and repair: YoaA, a helicase-related protein, promotes azidothymidine tolerance through association with Chi, an accessory clamp loader protein.</title>
        <authorList>
            <person name="Brown L.T."/>
            <person name="Sutera V.A. Jr."/>
            <person name="Zhou S."/>
            <person name="Weitzel C.S."/>
            <person name="Cheng Y."/>
            <person name="Lovett S.T."/>
        </authorList>
    </citation>
    <scope>MUTAGENESIS OF THR-15</scope>
    <source>
        <strain>K12 / AB1157</strain>
    </source>
</reference>
<reference key="14">
    <citation type="journal article" date="2002" name="Structure">
        <title>Structural basis for proofreading during replication of the Escherichia coli chromosome.</title>
        <authorList>
            <person name="Hamdan S."/>
            <person name="Carr P.D."/>
            <person name="Brown S.E."/>
            <person name="Ollis D.L."/>
            <person name="Dixon N.E."/>
        </authorList>
    </citation>
    <scope>X-RAY CRYSTALLOGRAPHY (1.7 ANGSTROMS) OF 1-186 IN COMPLEX WITH METAL IONS AND SUBSTRATE ANALOG</scope>
</reference>
<reference evidence="8 9 10" key="15">
    <citation type="journal article" date="2015" name="Elife">
        <title>cryo-EM structures of the E. coli replicative DNA polymerase reveal its dynamic interactions with the DNA sliding clamp, exonuclease and tau.</title>
        <authorList>
            <person name="Fernandez-Leiro R."/>
            <person name="Conrad J."/>
            <person name="Scheres S.H."/>
            <person name="Lamers M.H."/>
        </authorList>
    </citation>
    <scope>STRUCTURE BY ELECTRON MICROSCOPY (7.30 ANGSTROMS) OF DNAE; DNAN; DNAQ; DNAX WITH AND WITHOUT DNA</scope>
    <scope>SUBUNIT</scope>
    <scope>MUTAGENESIS OF 183-THR--PHE-187</scope>
</reference>
<accession>P03007</accession>
<keyword id="KW-0002">3D-structure</keyword>
<keyword id="KW-0235">DNA replication</keyword>
<keyword id="KW-0239">DNA-directed DNA polymerase</keyword>
<keyword id="KW-0269">Exonuclease</keyword>
<keyword id="KW-0378">Hydrolase</keyword>
<keyword id="KW-0460">Magnesium</keyword>
<keyword id="KW-0464">Manganese</keyword>
<keyword id="KW-0479">Metal-binding</keyword>
<keyword id="KW-0540">Nuclease</keyword>
<keyword id="KW-0548">Nucleotidyltransferase</keyword>
<keyword id="KW-1185">Reference proteome</keyword>
<keyword id="KW-0808">Transferase</keyword>
<sequence>MSTAITRQIVLDTETTGMNQIGAHYEGHKIIEIGAVEVVNRRLTGNNFHVYLKPDRLVDPEAFGVHGIADEFLLDKPTFAEVADEFMDYIRGAELVIHNAAFDIGFMDYEFSLLKRDIPKTNTFCKVTDSLAVARKMFPGKRNSLDALCARYEIDNSKRTLHGALLDAQILAEVYLAMTGGQTSMAFAMEGETQQQQGEATIQRIVRQASKLRVVFATDEEIAAHEARLDLVQKKGGSCLWRA</sequence>